<evidence type="ECO:0000255" key="1">
    <source>
        <dbReference type="HAMAP-Rule" id="MF_01398"/>
    </source>
</evidence>
<sequence length="171" mass="19903">MFVVKMVLGFLILLSPLCATGLDISQTDIIERSLNFLLFVGILWYFLAKRLRSFLHSKSLEISKRLEEIQAQLKVSKEHKKKLLKELEQAKEKAELIISDANKEAYTITQKYELQTKMDVENLIKNSKALMDLEVKKIKRELVESVFKDLRESKKVSFNAQDCVNILKQRL</sequence>
<organism>
    <name type="scientific">Helicobacter pylori (strain J99 / ATCC 700824)</name>
    <name type="common">Campylobacter pylori J99</name>
    <dbReference type="NCBI Taxonomy" id="85963"/>
    <lineage>
        <taxon>Bacteria</taxon>
        <taxon>Pseudomonadati</taxon>
        <taxon>Campylobacterota</taxon>
        <taxon>Epsilonproteobacteria</taxon>
        <taxon>Campylobacterales</taxon>
        <taxon>Helicobacteraceae</taxon>
        <taxon>Helicobacter</taxon>
    </lineage>
</organism>
<feature type="chain" id="PRO_0000082377" description="ATP synthase subunit b">
    <location>
        <begin position="1"/>
        <end position="171"/>
    </location>
</feature>
<feature type="transmembrane region" description="Helical" evidence="1">
    <location>
        <begin position="2"/>
        <end position="22"/>
    </location>
</feature>
<dbReference type="EMBL" id="AE001439">
    <property type="protein sequence ID" value="AAD06629.1"/>
    <property type="molecule type" value="Genomic_DNA"/>
</dbReference>
<dbReference type="PIR" id="H71855">
    <property type="entry name" value="H71855"/>
</dbReference>
<dbReference type="RefSeq" id="WP_000498443.1">
    <property type="nucleotide sequence ID" value="NC_000921.1"/>
</dbReference>
<dbReference type="SMR" id="Q9ZK77"/>
<dbReference type="KEGG" id="hpj:jhp_1064"/>
<dbReference type="PATRIC" id="fig|85963.30.peg.1524"/>
<dbReference type="eggNOG" id="COG0711">
    <property type="taxonomic scope" value="Bacteria"/>
</dbReference>
<dbReference type="Proteomes" id="UP000000804">
    <property type="component" value="Chromosome"/>
</dbReference>
<dbReference type="GO" id="GO:0005886">
    <property type="term" value="C:plasma membrane"/>
    <property type="evidence" value="ECO:0007669"/>
    <property type="project" value="UniProtKB-SubCell"/>
</dbReference>
<dbReference type="GO" id="GO:0045259">
    <property type="term" value="C:proton-transporting ATP synthase complex"/>
    <property type="evidence" value="ECO:0007669"/>
    <property type="project" value="UniProtKB-KW"/>
</dbReference>
<dbReference type="GO" id="GO:0046933">
    <property type="term" value="F:proton-transporting ATP synthase activity, rotational mechanism"/>
    <property type="evidence" value="ECO:0007669"/>
    <property type="project" value="UniProtKB-UniRule"/>
</dbReference>
<dbReference type="CDD" id="cd06503">
    <property type="entry name" value="ATP-synt_Fo_b"/>
    <property type="match status" value="1"/>
</dbReference>
<dbReference type="Gene3D" id="1.20.5.620">
    <property type="entry name" value="F1F0 ATP synthase subunit B, membrane domain"/>
    <property type="match status" value="1"/>
</dbReference>
<dbReference type="HAMAP" id="MF_01398">
    <property type="entry name" value="ATP_synth_b_bprime"/>
    <property type="match status" value="1"/>
</dbReference>
<dbReference type="InterPro" id="IPR028987">
    <property type="entry name" value="ATP_synth_B-like_membr_sf"/>
</dbReference>
<dbReference type="InterPro" id="IPR002146">
    <property type="entry name" value="ATP_synth_b/b'su_bac/chlpt"/>
</dbReference>
<dbReference type="NCBIfam" id="NF006292">
    <property type="entry name" value="PRK08475.1"/>
    <property type="match status" value="1"/>
</dbReference>
<dbReference type="Pfam" id="PF00430">
    <property type="entry name" value="ATP-synt_B"/>
    <property type="match status" value="1"/>
</dbReference>
<dbReference type="SUPFAM" id="SSF81573">
    <property type="entry name" value="F1F0 ATP synthase subunit B, membrane domain"/>
    <property type="match status" value="1"/>
</dbReference>
<keyword id="KW-0066">ATP synthesis</keyword>
<keyword id="KW-0997">Cell inner membrane</keyword>
<keyword id="KW-1003">Cell membrane</keyword>
<keyword id="KW-0138">CF(0)</keyword>
<keyword id="KW-0375">Hydrogen ion transport</keyword>
<keyword id="KW-0406">Ion transport</keyword>
<keyword id="KW-0472">Membrane</keyword>
<keyword id="KW-0812">Transmembrane</keyword>
<keyword id="KW-1133">Transmembrane helix</keyword>
<keyword id="KW-0813">Transport</keyword>
<proteinExistence type="inferred from homology"/>
<gene>
    <name evidence="1" type="primary">atpF</name>
    <name type="ordered locus">jhp_1064</name>
</gene>
<accession>Q9ZK77</accession>
<reference key="1">
    <citation type="journal article" date="1999" name="Nature">
        <title>Genomic sequence comparison of two unrelated isolates of the human gastric pathogen Helicobacter pylori.</title>
        <authorList>
            <person name="Alm R.A."/>
            <person name="Ling L.-S.L."/>
            <person name="Moir D.T."/>
            <person name="King B.L."/>
            <person name="Brown E.D."/>
            <person name="Doig P.C."/>
            <person name="Smith D.R."/>
            <person name="Noonan B."/>
            <person name="Guild B.C."/>
            <person name="deJonge B.L."/>
            <person name="Carmel G."/>
            <person name="Tummino P.J."/>
            <person name="Caruso A."/>
            <person name="Uria-Nickelsen M."/>
            <person name="Mills D.M."/>
            <person name="Ives C."/>
            <person name="Gibson R."/>
            <person name="Merberg D."/>
            <person name="Mills S.D."/>
            <person name="Jiang Q."/>
            <person name="Taylor D.E."/>
            <person name="Vovis G.F."/>
            <person name="Trust T.J."/>
        </authorList>
    </citation>
    <scope>NUCLEOTIDE SEQUENCE [LARGE SCALE GENOMIC DNA]</scope>
    <source>
        <strain>J99 / ATCC 700824</strain>
    </source>
</reference>
<protein>
    <recommendedName>
        <fullName evidence="1">ATP synthase subunit b</fullName>
    </recommendedName>
    <alternativeName>
        <fullName evidence="1">ATP synthase F(0) sector subunit b</fullName>
    </alternativeName>
    <alternativeName>
        <fullName evidence="1">ATPase subunit I</fullName>
    </alternativeName>
    <alternativeName>
        <fullName evidence="1">F-type ATPase subunit b</fullName>
        <shortName evidence="1">F-ATPase subunit b</shortName>
    </alternativeName>
</protein>
<comment type="function">
    <text evidence="1">F(1)F(0) ATP synthase produces ATP from ADP in the presence of a proton or sodium gradient. F-type ATPases consist of two structural domains, F(1) containing the extramembraneous catalytic core and F(0) containing the membrane proton channel, linked together by a central stalk and a peripheral stalk. During catalysis, ATP synthesis in the catalytic domain of F(1) is coupled via a rotary mechanism of the central stalk subunits to proton translocation.</text>
</comment>
<comment type="function">
    <text evidence="1">Component of the F(0) channel, it forms part of the peripheral stalk, linking F(1) to F(0).</text>
</comment>
<comment type="subunit">
    <text evidence="1">F-type ATPases have 2 components, F(1) - the catalytic core - and F(0) - the membrane proton channel. F(1) has five subunits: alpha(3), beta(3), gamma(1), delta(1), epsilon(1). F(0) has three main subunits: a(1), b(2) and c(10-14). The alpha and beta chains form an alternating ring which encloses part of the gamma chain. F(1) is attached to F(0) by a central stalk formed by the gamma and epsilon chains, while a peripheral stalk is formed by the delta and b chains.</text>
</comment>
<comment type="subcellular location">
    <subcellularLocation>
        <location evidence="1">Cell inner membrane</location>
        <topology evidence="1">Single-pass membrane protein</topology>
    </subcellularLocation>
</comment>
<comment type="similarity">
    <text evidence="1">Belongs to the ATPase B chain family.</text>
</comment>
<name>ATPF_HELPJ</name>